<evidence type="ECO:0000255" key="1">
    <source>
        <dbReference type="HAMAP-Rule" id="MF_00821"/>
    </source>
</evidence>
<proteinExistence type="inferred from homology"/>
<reference key="1">
    <citation type="submission" date="2007-05" db="EMBL/GenBank/DDBJ databases">
        <title>Complete sequence of Pseudomonas putida F1.</title>
        <authorList>
            <consortium name="US DOE Joint Genome Institute"/>
            <person name="Copeland A."/>
            <person name="Lucas S."/>
            <person name="Lapidus A."/>
            <person name="Barry K."/>
            <person name="Detter J.C."/>
            <person name="Glavina del Rio T."/>
            <person name="Hammon N."/>
            <person name="Israni S."/>
            <person name="Dalin E."/>
            <person name="Tice H."/>
            <person name="Pitluck S."/>
            <person name="Chain P."/>
            <person name="Malfatti S."/>
            <person name="Shin M."/>
            <person name="Vergez L."/>
            <person name="Schmutz J."/>
            <person name="Larimer F."/>
            <person name="Land M."/>
            <person name="Hauser L."/>
            <person name="Kyrpides N."/>
            <person name="Lykidis A."/>
            <person name="Parales R."/>
            <person name="Richardson P."/>
        </authorList>
    </citation>
    <scope>NUCLEOTIDE SEQUENCE [LARGE SCALE GENOMIC DNA]</scope>
    <source>
        <strain>ATCC 700007 / DSM 6899 / JCM 31910 / BCRC 17059 / LMG 24140 / F1</strain>
    </source>
</reference>
<protein>
    <recommendedName>
        <fullName evidence="1">Protein-export protein SecB</fullName>
    </recommendedName>
</protein>
<comment type="function">
    <text evidence="1">One of the proteins required for the normal export of preproteins out of the cell cytoplasm. It is a molecular chaperone that binds to a subset of precursor proteins, maintaining them in a translocation-competent state. It also specifically binds to its receptor SecA.</text>
</comment>
<comment type="subunit">
    <text evidence="1">Homotetramer, a dimer of dimers. One homotetramer interacts with 1 SecA dimer.</text>
</comment>
<comment type="subcellular location">
    <subcellularLocation>
        <location evidence="1">Cytoplasm</location>
    </subcellularLocation>
</comment>
<comment type="similarity">
    <text evidence="1">Belongs to the SecB family.</text>
</comment>
<feature type="chain" id="PRO_1000062495" description="Protein-export protein SecB">
    <location>
        <begin position="1"/>
        <end position="161"/>
    </location>
</feature>
<accession>A5WA86</accession>
<organism>
    <name type="scientific">Pseudomonas putida (strain ATCC 700007 / DSM 6899 / JCM 31910 / BCRC 17059 / LMG 24140 / F1)</name>
    <dbReference type="NCBI Taxonomy" id="351746"/>
    <lineage>
        <taxon>Bacteria</taxon>
        <taxon>Pseudomonadati</taxon>
        <taxon>Pseudomonadota</taxon>
        <taxon>Gammaproteobacteria</taxon>
        <taxon>Pseudomonadales</taxon>
        <taxon>Pseudomonadaceae</taxon>
        <taxon>Pseudomonas</taxon>
    </lineage>
</organism>
<dbReference type="EMBL" id="CP000712">
    <property type="protein sequence ID" value="ABQ81046.1"/>
    <property type="molecule type" value="Genomic_DNA"/>
</dbReference>
<dbReference type="SMR" id="A5WA86"/>
<dbReference type="KEGG" id="ppf:Pput_4926"/>
<dbReference type="eggNOG" id="COG1952">
    <property type="taxonomic scope" value="Bacteria"/>
</dbReference>
<dbReference type="HOGENOM" id="CLU_111574_1_0_6"/>
<dbReference type="GO" id="GO:0005737">
    <property type="term" value="C:cytoplasm"/>
    <property type="evidence" value="ECO:0007669"/>
    <property type="project" value="UniProtKB-SubCell"/>
</dbReference>
<dbReference type="GO" id="GO:0051082">
    <property type="term" value="F:unfolded protein binding"/>
    <property type="evidence" value="ECO:0007669"/>
    <property type="project" value="InterPro"/>
</dbReference>
<dbReference type="GO" id="GO:0006457">
    <property type="term" value="P:protein folding"/>
    <property type="evidence" value="ECO:0007669"/>
    <property type="project" value="UniProtKB-UniRule"/>
</dbReference>
<dbReference type="GO" id="GO:0051262">
    <property type="term" value="P:protein tetramerization"/>
    <property type="evidence" value="ECO:0007669"/>
    <property type="project" value="InterPro"/>
</dbReference>
<dbReference type="GO" id="GO:0015031">
    <property type="term" value="P:protein transport"/>
    <property type="evidence" value="ECO:0007669"/>
    <property type="project" value="UniProtKB-UniRule"/>
</dbReference>
<dbReference type="Gene3D" id="3.10.420.10">
    <property type="entry name" value="SecB-like"/>
    <property type="match status" value="1"/>
</dbReference>
<dbReference type="HAMAP" id="MF_00821">
    <property type="entry name" value="SecB"/>
    <property type="match status" value="1"/>
</dbReference>
<dbReference type="InterPro" id="IPR003708">
    <property type="entry name" value="SecB"/>
</dbReference>
<dbReference type="InterPro" id="IPR035958">
    <property type="entry name" value="SecB-like_sf"/>
</dbReference>
<dbReference type="NCBIfam" id="NF004393">
    <property type="entry name" value="PRK05751.1-4"/>
    <property type="match status" value="1"/>
</dbReference>
<dbReference type="NCBIfam" id="TIGR00809">
    <property type="entry name" value="secB"/>
    <property type="match status" value="1"/>
</dbReference>
<dbReference type="PANTHER" id="PTHR36918">
    <property type="match status" value="1"/>
</dbReference>
<dbReference type="PANTHER" id="PTHR36918:SF1">
    <property type="entry name" value="PROTEIN-EXPORT PROTEIN SECB"/>
    <property type="match status" value="1"/>
</dbReference>
<dbReference type="Pfam" id="PF02556">
    <property type="entry name" value="SecB"/>
    <property type="match status" value="1"/>
</dbReference>
<dbReference type="PRINTS" id="PR01594">
    <property type="entry name" value="SECBCHAPRONE"/>
</dbReference>
<dbReference type="SUPFAM" id="SSF54611">
    <property type="entry name" value="SecB-like"/>
    <property type="match status" value="1"/>
</dbReference>
<name>SECB_PSEP1</name>
<keyword id="KW-0143">Chaperone</keyword>
<keyword id="KW-0963">Cytoplasm</keyword>
<keyword id="KW-0653">Protein transport</keyword>
<keyword id="KW-0811">Translocation</keyword>
<keyword id="KW-0813">Transport</keyword>
<gene>
    <name evidence="1" type="primary">secB</name>
    <name type="ordered locus">Pput_4926</name>
</gene>
<sequence length="161" mass="17754">MTDQQTNGAAAEDNSPQFSLQRIYVRDLSFEAPKSPQIFRQTWEPSVALDLNTKQKSLEGDFHEVVLTLSVTVKNGDEVAFIAEVQQAGIFLIANLDAPSMSHTLGAFCPNILFPYAREALDSLVTRGSFPALMLSPVNFDALYAQEMQRMQEAGEAPTVQ</sequence>